<proteinExistence type="inferred from homology"/>
<sequence>MIEVCPENVRIEESWKKVLYEQFSQDYFVRIKETLLAAKAQGIVTYPPNKLIFNAFDQTPFDAVKAVIIGQDPYHGRGQAMGLSFSVPKGVRPPPSLLNIYKELKRSYPDFQVPDHGDLSAWAKQGVLLLNASLTVEAGKAGSHRAIGWQEFTHAAIEALSNEREHIVFMLWGNFAKAKAQFIDAEKHCILTAVHPSPLAGGAFIGCDHFRRANDYLIAHGKTPINWQV</sequence>
<feature type="chain" id="PRO_1000009884" description="Uracil-DNA glycosylase">
    <location>
        <begin position="1"/>
        <end position="229"/>
    </location>
</feature>
<feature type="active site" description="Proton acceptor" evidence="1">
    <location>
        <position position="72"/>
    </location>
</feature>
<organism>
    <name type="scientific">Dichelobacter nodosus (strain VCS1703A)</name>
    <dbReference type="NCBI Taxonomy" id="246195"/>
    <lineage>
        <taxon>Bacteria</taxon>
        <taxon>Pseudomonadati</taxon>
        <taxon>Pseudomonadota</taxon>
        <taxon>Gammaproteobacteria</taxon>
        <taxon>Cardiobacteriales</taxon>
        <taxon>Cardiobacteriaceae</taxon>
        <taxon>Dichelobacter</taxon>
    </lineage>
</organism>
<accession>A5EVB8</accession>
<comment type="function">
    <text evidence="1">Excises uracil residues from the DNA which can arise as a result of misincorporation of dUMP residues by DNA polymerase or due to deamination of cytosine.</text>
</comment>
<comment type="catalytic activity">
    <reaction evidence="1">
        <text>Hydrolyzes single-stranded DNA or mismatched double-stranded DNA and polynucleotides, releasing free uracil.</text>
        <dbReference type="EC" id="3.2.2.27"/>
    </reaction>
</comment>
<comment type="subcellular location">
    <subcellularLocation>
        <location evidence="1">Cytoplasm</location>
    </subcellularLocation>
</comment>
<comment type="similarity">
    <text evidence="1">Belongs to the uracil-DNA glycosylase (UDG) superfamily. UNG family.</text>
</comment>
<protein>
    <recommendedName>
        <fullName evidence="1">Uracil-DNA glycosylase</fullName>
        <shortName evidence="1">UDG</shortName>
        <ecNumber evidence="1">3.2.2.27</ecNumber>
    </recommendedName>
</protein>
<gene>
    <name evidence="1" type="primary">ung</name>
    <name type="ordered locus">DNO_0631</name>
</gene>
<keyword id="KW-0963">Cytoplasm</keyword>
<keyword id="KW-0227">DNA damage</keyword>
<keyword id="KW-0234">DNA repair</keyword>
<keyword id="KW-0378">Hydrolase</keyword>
<keyword id="KW-1185">Reference proteome</keyword>
<name>UNG_DICNV</name>
<reference key="1">
    <citation type="journal article" date="2007" name="Nat. Biotechnol.">
        <title>Genome sequence and identification of candidate vaccine antigens from the animal pathogen Dichelobacter nodosus.</title>
        <authorList>
            <person name="Myers G.S.A."/>
            <person name="Parker D."/>
            <person name="Al-Hasani K."/>
            <person name="Kennan R.M."/>
            <person name="Seemann T."/>
            <person name="Ren Q."/>
            <person name="Badger J.H."/>
            <person name="Selengut J.D."/>
            <person name="Deboy R.T."/>
            <person name="Tettelin H."/>
            <person name="Boyce J.D."/>
            <person name="McCarl V.P."/>
            <person name="Han X."/>
            <person name="Nelson W.C."/>
            <person name="Madupu R."/>
            <person name="Mohamoud Y."/>
            <person name="Holley T."/>
            <person name="Fedorova N."/>
            <person name="Khouri H."/>
            <person name="Bottomley S.P."/>
            <person name="Whittington R.J."/>
            <person name="Adler B."/>
            <person name="Songer J.G."/>
            <person name="Rood J.I."/>
            <person name="Paulsen I.T."/>
        </authorList>
    </citation>
    <scope>NUCLEOTIDE SEQUENCE [LARGE SCALE GENOMIC DNA]</scope>
    <source>
        <strain>VCS1703A</strain>
    </source>
</reference>
<dbReference type="EC" id="3.2.2.27" evidence="1"/>
<dbReference type="EMBL" id="CP000513">
    <property type="protein sequence ID" value="ABQ14195.1"/>
    <property type="molecule type" value="Genomic_DNA"/>
</dbReference>
<dbReference type="SMR" id="A5EVB8"/>
<dbReference type="STRING" id="246195.DNO_0631"/>
<dbReference type="KEGG" id="dno:DNO_0631"/>
<dbReference type="eggNOG" id="COG0692">
    <property type="taxonomic scope" value="Bacteria"/>
</dbReference>
<dbReference type="HOGENOM" id="CLU_032162_3_0_6"/>
<dbReference type="OrthoDB" id="9804372at2"/>
<dbReference type="Proteomes" id="UP000000248">
    <property type="component" value="Chromosome"/>
</dbReference>
<dbReference type="GO" id="GO:0005737">
    <property type="term" value="C:cytoplasm"/>
    <property type="evidence" value="ECO:0007669"/>
    <property type="project" value="UniProtKB-SubCell"/>
</dbReference>
<dbReference type="GO" id="GO:0004844">
    <property type="term" value="F:uracil DNA N-glycosylase activity"/>
    <property type="evidence" value="ECO:0007669"/>
    <property type="project" value="UniProtKB-UniRule"/>
</dbReference>
<dbReference type="GO" id="GO:0097510">
    <property type="term" value="P:base-excision repair, AP site formation via deaminated base removal"/>
    <property type="evidence" value="ECO:0007669"/>
    <property type="project" value="TreeGrafter"/>
</dbReference>
<dbReference type="CDD" id="cd10027">
    <property type="entry name" value="UDG-F1-like"/>
    <property type="match status" value="1"/>
</dbReference>
<dbReference type="FunFam" id="3.40.470.10:FF:000001">
    <property type="entry name" value="Uracil-DNA glycosylase"/>
    <property type="match status" value="1"/>
</dbReference>
<dbReference type="Gene3D" id="3.40.470.10">
    <property type="entry name" value="Uracil-DNA glycosylase-like domain"/>
    <property type="match status" value="1"/>
</dbReference>
<dbReference type="HAMAP" id="MF_00148">
    <property type="entry name" value="UDG"/>
    <property type="match status" value="1"/>
</dbReference>
<dbReference type="InterPro" id="IPR002043">
    <property type="entry name" value="UDG_fam1"/>
</dbReference>
<dbReference type="InterPro" id="IPR018085">
    <property type="entry name" value="Ura-DNA_Glyclase_AS"/>
</dbReference>
<dbReference type="InterPro" id="IPR005122">
    <property type="entry name" value="Uracil-DNA_glycosylase-like"/>
</dbReference>
<dbReference type="InterPro" id="IPR036895">
    <property type="entry name" value="Uracil-DNA_glycosylase-like_sf"/>
</dbReference>
<dbReference type="NCBIfam" id="NF003588">
    <property type="entry name" value="PRK05254.1-1"/>
    <property type="match status" value="1"/>
</dbReference>
<dbReference type="NCBIfam" id="NF003589">
    <property type="entry name" value="PRK05254.1-2"/>
    <property type="match status" value="1"/>
</dbReference>
<dbReference type="NCBIfam" id="NF003591">
    <property type="entry name" value="PRK05254.1-4"/>
    <property type="match status" value="1"/>
</dbReference>
<dbReference type="NCBIfam" id="NF003592">
    <property type="entry name" value="PRK05254.1-5"/>
    <property type="match status" value="1"/>
</dbReference>
<dbReference type="NCBIfam" id="TIGR00628">
    <property type="entry name" value="ung"/>
    <property type="match status" value="1"/>
</dbReference>
<dbReference type="PANTHER" id="PTHR11264">
    <property type="entry name" value="URACIL-DNA GLYCOSYLASE"/>
    <property type="match status" value="1"/>
</dbReference>
<dbReference type="PANTHER" id="PTHR11264:SF0">
    <property type="entry name" value="URACIL-DNA GLYCOSYLASE"/>
    <property type="match status" value="1"/>
</dbReference>
<dbReference type="Pfam" id="PF03167">
    <property type="entry name" value="UDG"/>
    <property type="match status" value="1"/>
</dbReference>
<dbReference type="SMART" id="SM00986">
    <property type="entry name" value="UDG"/>
    <property type="match status" value="1"/>
</dbReference>
<dbReference type="SMART" id="SM00987">
    <property type="entry name" value="UreE_C"/>
    <property type="match status" value="1"/>
</dbReference>
<dbReference type="SUPFAM" id="SSF52141">
    <property type="entry name" value="Uracil-DNA glycosylase-like"/>
    <property type="match status" value="1"/>
</dbReference>
<dbReference type="PROSITE" id="PS00130">
    <property type="entry name" value="U_DNA_GLYCOSYLASE"/>
    <property type="match status" value="1"/>
</dbReference>
<evidence type="ECO:0000255" key="1">
    <source>
        <dbReference type="HAMAP-Rule" id="MF_00148"/>
    </source>
</evidence>